<organism>
    <name type="scientific">Neurospora crassa (strain ATCC 24698 / 74-OR23-1A / CBS 708.71 / DSM 1257 / FGSC 987)</name>
    <dbReference type="NCBI Taxonomy" id="367110"/>
    <lineage>
        <taxon>Eukaryota</taxon>
        <taxon>Fungi</taxon>
        <taxon>Dikarya</taxon>
        <taxon>Ascomycota</taxon>
        <taxon>Pezizomycotina</taxon>
        <taxon>Sordariomycetes</taxon>
        <taxon>Sordariomycetidae</taxon>
        <taxon>Sordariales</taxon>
        <taxon>Sordariaceae</taxon>
        <taxon>Neurospora</taxon>
    </lineage>
</organism>
<keyword id="KW-0002">3D-structure</keyword>
<keyword id="KW-0158">Chromosome</keyword>
<keyword id="KW-0479">Metal-binding</keyword>
<keyword id="KW-0489">Methyltransferase</keyword>
<keyword id="KW-0539">Nucleus</keyword>
<keyword id="KW-1185">Reference proteome</keyword>
<keyword id="KW-0949">S-adenosyl-L-methionine</keyword>
<keyword id="KW-0808">Transferase</keyword>
<keyword id="KW-0862">Zinc</keyword>
<name>DIM5_NEUCR</name>
<dbReference type="EC" id="2.1.1.355" evidence="6 7 8"/>
<dbReference type="EMBL" id="AF419248">
    <property type="protein sequence ID" value="AAL35215.1"/>
    <property type="status" value="ALT_SEQ"/>
    <property type="molecule type" value="Genomic_DNA"/>
</dbReference>
<dbReference type="EMBL" id="BX908809">
    <property type="protein sequence ID" value="CAF06044.1"/>
    <property type="status" value="ALT_SEQ"/>
    <property type="molecule type" value="Genomic_DNA"/>
</dbReference>
<dbReference type="EMBL" id="CM002239">
    <property type="protein sequence ID" value="EAA28243.2"/>
    <property type="molecule type" value="Genomic_DNA"/>
</dbReference>
<dbReference type="RefSeq" id="XP_957479.2">
    <property type="nucleotide sequence ID" value="XM_952386.3"/>
</dbReference>
<dbReference type="PDB" id="1ML9">
    <property type="method" value="X-ray"/>
    <property type="resolution" value="1.98 A"/>
    <property type="chains" value="A=30-331"/>
</dbReference>
<dbReference type="PDB" id="1PEG">
    <property type="method" value="X-ray"/>
    <property type="resolution" value="2.59 A"/>
    <property type="chains" value="A/B=30-331"/>
</dbReference>
<dbReference type="PDBsum" id="1ML9"/>
<dbReference type="PDBsum" id="1PEG"/>
<dbReference type="SMR" id="Q8X225"/>
<dbReference type="DIP" id="DIP-39600N"/>
<dbReference type="IntAct" id="Q8X225">
    <property type="interactions" value="2"/>
</dbReference>
<dbReference type="STRING" id="367110.Q8X225"/>
<dbReference type="BindingDB" id="Q8X225"/>
<dbReference type="ChEMBL" id="CHEMBL3309062"/>
<dbReference type="PaxDb" id="5141-EFNCRP00000005137"/>
<dbReference type="EnsemblFungi" id="EAA28243">
    <property type="protein sequence ID" value="EAA28243"/>
    <property type="gene ID" value="NCU04402"/>
</dbReference>
<dbReference type="GeneID" id="3873656"/>
<dbReference type="KEGG" id="ncr:NCU04402"/>
<dbReference type="VEuPathDB" id="FungiDB:NCU04402"/>
<dbReference type="HOGENOM" id="CLU_020840_11_0_1"/>
<dbReference type="InParanoid" id="Q8X225"/>
<dbReference type="OMA" id="HHGNISH"/>
<dbReference type="OrthoDB" id="308383at2759"/>
<dbReference type="EvolutionaryTrace" id="Q8X225"/>
<dbReference type="Proteomes" id="UP000001805">
    <property type="component" value="Chromosome 4, Linkage Group IV"/>
</dbReference>
<dbReference type="GO" id="GO:0005694">
    <property type="term" value="C:chromosome"/>
    <property type="evidence" value="ECO:0007669"/>
    <property type="project" value="UniProtKB-SubCell"/>
</dbReference>
<dbReference type="GO" id="GO:0005634">
    <property type="term" value="C:nucleus"/>
    <property type="evidence" value="ECO:0007669"/>
    <property type="project" value="UniProtKB-SubCell"/>
</dbReference>
<dbReference type="GO" id="GO:0003690">
    <property type="term" value="F:double-stranded DNA binding"/>
    <property type="evidence" value="ECO:0000318"/>
    <property type="project" value="GO_Central"/>
</dbReference>
<dbReference type="GO" id="GO:0140949">
    <property type="term" value="F:histone H3K9 trimethyltransferase activity"/>
    <property type="evidence" value="ECO:0007669"/>
    <property type="project" value="UniProtKB-EC"/>
</dbReference>
<dbReference type="GO" id="GO:0042054">
    <property type="term" value="F:histone methyltransferase activity"/>
    <property type="evidence" value="ECO:0000318"/>
    <property type="project" value="GO_Central"/>
</dbReference>
<dbReference type="GO" id="GO:0008270">
    <property type="term" value="F:zinc ion binding"/>
    <property type="evidence" value="ECO:0007669"/>
    <property type="project" value="InterPro"/>
</dbReference>
<dbReference type="GO" id="GO:0032259">
    <property type="term" value="P:methylation"/>
    <property type="evidence" value="ECO:0007669"/>
    <property type="project" value="UniProtKB-KW"/>
</dbReference>
<dbReference type="CDD" id="cd19473">
    <property type="entry name" value="SET_SUV39H_DIM5-like"/>
    <property type="match status" value="1"/>
</dbReference>
<dbReference type="Gene3D" id="2.170.270.10">
    <property type="entry name" value="SET domain"/>
    <property type="match status" value="1"/>
</dbReference>
<dbReference type="InterPro" id="IPR050973">
    <property type="entry name" value="H3K9_Histone-Lys_N-MTase"/>
</dbReference>
<dbReference type="InterPro" id="IPR003616">
    <property type="entry name" value="Post-SET_dom"/>
</dbReference>
<dbReference type="InterPro" id="IPR007728">
    <property type="entry name" value="Pre-SET_dom"/>
</dbReference>
<dbReference type="InterPro" id="IPR001214">
    <property type="entry name" value="SET_dom"/>
</dbReference>
<dbReference type="InterPro" id="IPR046341">
    <property type="entry name" value="SET_dom_sf"/>
</dbReference>
<dbReference type="PANTHER" id="PTHR46223:SF3">
    <property type="entry name" value="HISTONE-LYSINE N-METHYLTRANSFERASE SET-23"/>
    <property type="match status" value="1"/>
</dbReference>
<dbReference type="PANTHER" id="PTHR46223">
    <property type="entry name" value="HISTONE-LYSINE N-METHYLTRANSFERASE SUV39H"/>
    <property type="match status" value="1"/>
</dbReference>
<dbReference type="Pfam" id="PF05033">
    <property type="entry name" value="Pre-SET"/>
    <property type="match status" value="1"/>
</dbReference>
<dbReference type="Pfam" id="PF00856">
    <property type="entry name" value="SET"/>
    <property type="match status" value="1"/>
</dbReference>
<dbReference type="SMART" id="SM00468">
    <property type="entry name" value="PreSET"/>
    <property type="match status" value="1"/>
</dbReference>
<dbReference type="SMART" id="SM00317">
    <property type="entry name" value="SET"/>
    <property type="match status" value="1"/>
</dbReference>
<dbReference type="SUPFAM" id="SSF82199">
    <property type="entry name" value="SET domain"/>
    <property type="match status" value="1"/>
</dbReference>
<dbReference type="PROSITE" id="PS50868">
    <property type="entry name" value="POST_SET"/>
    <property type="match status" value="1"/>
</dbReference>
<dbReference type="PROSITE" id="PS50867">
    <property type="entry name" value="PRE_SET"/>
    <property type="match status" value="1"/>
</dbReference>
<dbReference type="PROSITE" id="PS50280">
    <property type="entry name" value="SET"/>
    <property type="match status" value="1"/>
</dbReference>
<comment type="function">
    <text evidence="5 6 7 8 10">Histone methyltransferase that specifically trimethylates histone H3 to form H3K9me3. H3K9me3 marks chromatin regions for DNA methylation (PubMed:11713521, PubMed:12372305, PubMed:12679815, PubMed:12887903). Dim-5 recognizes Arg-8 to Gly-12 of the H3 tail with Thr-11 and Gly-12 being the most important specificity determinants, the recognition of whcih is important to distinguish H3K9 from H3K27 and H4K20 (PubMed:18215768).</text>
</comment>
<comment type="catalytic activity">
    <reaction evidence="6 7 8">
        <text>L-lysyl(9)-[histone H3] + 3 S-adenosyl-L-methionine = N(6),N(6),N(6)-trimethyl-L-lysyl(9)-[histone H3] + 3 S-adenosyl-L-homocysteine + 3 H(+)</text>
        <dbReference type="Rhea" id="RHEA:60276"/>
        <dbReference type="Rhea" id="RHEA-COMP:15538"/>
        <dbReference type="Rhea" id="RHEA-COMP:15546"/>
        <dbReference type="ChEBI" id="CHEBI:15378"/>
        <dbReference type="ChEBI" id="CHEBI:29969"/>
        <dbReference type="ChEBI" id="CHEBI:57856"/>
        <dbReference type="ChEBI" id="CHEBI:59789"/>
        <dbReference type="ChEBI" id="CHEBI:61961"/>
        <dbReference type="EC" id="2.1.1.355"/>
    </reaction>
</comment>
<comment type="interaction">
    <interactant intactId="EBI-1268994">
        <id>Q8X225</id>
    </interactant>
    <interactant intactId="EBI-1270655">
        <id>P07041</id>
        <label>hh3</label>
    </interactant>
    <organismsDiffer>false</organismsDiffer>
    <experiments>2</experiments>
</comment>
<comment type="interaction">
    <interactant intactId="EBI-1268994">
        <id>Q8X225</id>
    </interactant>
    <interactant intactId="EBI-15849296">
        <id>Q96UA9</id>
        <label>9G6.050</label>
    </interactant>
    <organismsDiffer>true</organismsDiffer>
    <experiments>2</experiments>
</comment>
<comment type="subcellular location">
    <subcellularLocation>
        <location evidence="1">Nucleus</location>
    </subcellularLocation>
    <subcellularLocation>
        <location evidence="1">Chromosome</location>
    </subcellularLocation>
</comment>
<comment type="domain">
    <text evidence="6">In the pre-SET domain, Cys residues bind 3 zinc ions that are arranged in a triangular cluster; some of these Cys residues contribute to the binding of two zinc ions within the cluster.</text>
</comment>
<comment type="similarity">
    <text evidence="4">Belongs to the class V-like SAM-binding methyltransferase superfamily. Histone-lysine methyltransferase family. Suvar3-9 subfamily.</text>
</comment>
<comment type="sequence caution" evidence="11">
    <conflict type="erroneous gene model prediction">
        <sequence resource="EMBL-CDS" id="AAL35215"/>
    </conflict>
</comment>
<comment type="sequence caution" evidence="11">
    <conflict type="erroneous gene model prediction">
        <sequence resource="EMBL-CDS" id="CAF06044"/>
    </conflict>
</comment>
<proteinExistence type="evidence at protein level"/>
<sequence length="331" mass="37572">MEKAFRPHFFNHGKPDANPKEKKNCHWCQIRSFATHAQLPISIVNREDDAFLNPNFRFIDHSIIGKNVPVADQSFRVGCSCASDEECMYSTCQCLDEMAPDSDEEADPYTRKKRFAYYSQGAKKGLLRDRVLQSQEPIYECHQGCACSKDCPNRVVERGRTVPLQIFRTKDRGWGVKCPVNIKRGQFVDRYLGEIITSEEADRRRAESTIARRKDVYLFALDKFSDPDSLDPLLAGQPLEVDGEYMSGPTRFINHSCDPNMAIFARVGDHADKHIHDLALFAIKDIPKGTELTFDYVNGLTGLESDAHDPSKISEMTKCLCGTAKCRGYLW</sequence>
<evidence type="ECO:0000250" key="1"/>
<evidence type="ECO:0000255" key="2">
    <source>
        <dbReference type="PROSITE-ProRule" id="PRU00155"/>
    </source>
</evidence>
<evidence type="ECO:0000255" key="3">
    <source>
        <dbReference type="PROSITE-ProRule" id="PRU00157"/>
    </source>
</evidence>
<evidence type="ECO:0000255" key="4">
    <source>
        <dbReference type="PROSITE-ProRule" id="PRU00190"/>
    </source>
</evidence>
<evidence type="ECO:0000269" key="5">
    <source>
    </source>
</evidence>
<evidence type="ECO:0000269" key="6">
    <source>
    </source>
</evidence>
<evidence type="ECO:0000269" key="7">
    <source>
    </source>
</evidence>
<evidence type="ECO:0000269" key="8">
    <source>
    </source>
</evidence>
<evidence type="ECO:0000269" key="9">
    <source>
    </source>
</evidence>
<evidence type="ECO:0000269" key="10">
    <source>
    </source>
</evidence>
<evidence type="ECO:0000305" key="11"/>
<evidence type="ECO:0007744" key="12">
    <source>
        <dbReference type="PDB" id="1ML9"/>
    </source>
</evidence>
<evidence type="ECO:0007744" key="13">
    <source>
        <dbReference type="PDB" id="1PEG"/>
    </source>
</evidence>
<evidence type="ECO:0007829" key="14">
    <source>
        <dbReference type="PDB" id="1ML9"/>
    </source>
</evidence>
<evidence type="ECO:0007829" key="15">
    <source>
        <dbReference type="PDB" id="1PEG"/>
    </source>
</evidence>
<feature type="chain" id="PRO_0000186062" description="Histone-lysine N-methyltransferase, H3 lysine-9 specific dim-5">
    <location>
        <begin position="1"/>
        <end position="331"/>
    </location>
</feature>
<feature type="domain" description="Pre-SET" evidence="3">
    <location>
        <begin position="77"/>
        <end position="159"/>
    </location>
</feature>
<feature type="domain" description="SET" evidence="4">
    <location>
        <begin position="162"/>
        <end position="297"/>
    </location>
</feature>
<feature type="domain" description="Post-SET" evidence="2">
    <location>
        <begin position="315"/>
        <end position="331"/>
    </location>
</feature>
<feature type="binding site" evidence="6 8 12 13">
    <location>
        <position position="79"/>
    </location>
    <ligand>
        <name>Zn(2+)</name>
        <dbReference type="ChEBI" id="CHEBI:29105"/>
        <label>1</label>
    </ligand>
</feature>
<feature type="binding site" evidence="6 8 12 13">
    <location>
        <position position="79"/>
    </location>
    <ligand>
        <name>Zn(2+)</name>
        <dbReference type="ChEBI" id="CHEBI:29105"/>
        <label>2</label>
    </ligand>
</feature>
<feature type="binding site" evidence="6 8 12 13">
    <location>
        <position position="81"/>
    </location>
    <ligand>
        <name>Zn(2+)</name>
        <dbReference type="ChEBI" id="CHEBI:29105"/>
        <label>1</label>
    </ligand>
</feature>
<feature type="binding site" evidence="6 8 12 13">
    <location>
        <position position="87"/>
    </location>
    <ligand>
        <name>Zn(2+)</name>
        <dbReference type="ChEBI" id="CHEBI:29105"/>
        <label>1</label>
    </ligand>
</feature>
<feature type="binding site" evidence="6 8 12 13">
    <location>
        <position position="87"/>
    </location>
    <ligand>
        <name>Zn(2+)</name>
        <dbReference type="ChEBI" id="CHEBI:29105"/>
        <label>3</label>
    </ligand>
</feature>
<feature type="binding site" evidence="6 8 12 13">
    <location>
        <position position="92"/>
    </location>
    <ligand>
        <name>Zn(2+)</name>
        <dbReference type="ChEBI" id="CHEBI:29105"/>
        <label>1</label>
    </ligand>
</feature>
<feature type="binding site" evidence="6 8 12 13">
    <location>
        <position position="94"/>
    </location>
    <ligand>
        <name>Zn(2+)</name>
        <dbReference type="ChEBI" id="CHEBI:29105"/>
        <label>2</label>
    </ligand>
</feature>
<feature type="binding site" evidence="6 8 12 13">
    <location>
        <position position="141"/>
    </location>
    <ligand>
        <name>Zn(2+)</name>
        <dbReference type="ChEBI" id="CHEBI:29105"/>
        <label>2</label>
    </ligand>
</feature>
<feature type="binding site" evidence="6 8 12 13">
    <location>
        <position position="141"/>
    </location>
    <ligand>
        <name>Zn(2+)</name>
        <dbReference type="ChEBI" id="CHEBI:29105"/>
        <label>3</label>
    </ligand>
</feature>
<feature type="binding site" evidence="6 8 12 13">
    <location>
        <position position="145"/>
    </location>
    <ligand>
        <name>Zn(2+)</name>
        <dbReference type="ChEBI" id="CHEBI:29105"/>
        <label>2</label>
    </ligand>
</feature>
<feature type="binding site" evidence="6 8 12 13">
    <location>
        <position position="147"/>
    </location>
    <ligand>
        <name>Zn(2+)</name>
        <dbReference type="ChEBI" id="CHEBI:29105"/>
        <label>3</label>
    </ligand>
</feature>
<feature type="binding site" evidence="6 8 12 13">
    <location>
        <position position="151"/>
    </location>
    <ligand>
        <name>Zn(2+)</name>
        <dbReference type="ChEBI" id="CHEBI:29105"/>
        <label>3</label>
    </ligand>
</feature>
<feature type="binding site" evidence="8 13">
    <location>
        <begin position="172"/>
        <end position="174"/>
    </location>
    <ligand>
        <name>S-adenosyl-L-methionine</name>
        <dbReference type="ChEBI" id="CHEBI:59789"/>
    </ligand>
</feature>
<feature type="binding site" evidence="8 13">
    <location>
        <position position="215"/>
    </location>
    <ligand>
        <name>S-adenosyl-L-methionine</name>
        <dbReference type="ChEBI" id="CHEBI:59789"/>
    </ligand>
</feature>
<feature type="binding site" evidence="8 13">
    <location>
        <position position="217"/>
    </location>
    <ligand>
        <name>S-adenosyl-L-methionine</name>
        <dbReference type="ChEBI" id="CHEBI:59789"/>
    </ligand>
</feature>
<feature type="binding site" evidence="8 13">
    <location>
        <position position="251"/>
    </location>
    <ligand>
        <name>S-adenosyl-L-methionine</name>
        <dbReference type="ChEBI" id="CHEBI:59789"/>
    </ligand>
</feature>
<feature type="binding site" evidence="8 13">
    <location>
        <begin position="254"/>
        <end position="255"/>
    </location>
    <ligand>
        <name>S-adenosyl-L-methionine</name>
        <dbReference type="ChEBI" id="CHEBI:59789"/>
    </ligand>
</feature>
<feature type="binding site" evidence="8 13">
    <location>
        <position position="257"/>
    </location>
    <ligand>
        <name>Zn(2+)</name>
        <dbReference type="ChEBI" id="CHEBI:29105"/>
        <label>4</label>
    </ligand>
</feature>
<feature type="binding site" evidence="8 13">
    <location>
        <position position="319"/>
    </location>
    <ligand>
        <name>Zn(2+)</name>
        <dbReference type="ChEBI" id="CHEBI:29105"/>
        <label>4</label>
    </ligand>
</feature>
<feature type="binding site" evidence="8 13">
    <location>
        <position position="321"/>
    </location>
    <ligand>
        <name>Zn(2+)</name>
        <dbReference type="ChEBI" id="CHEBI:29105"/>
        <label>4</label>
    </ligand>
</feature>
<feature type="binding site" evidence="8 13">
    <location>
        <position position="326"/>
    </location>
    <ligand>
        <name>Zn(2+)</name>
        <dbReference type="ChEBI" id="CHEBI:29105"/>
        <label>4</label>
    </ligand>
</feature>
<feature type="site" description="Interacts with H3S10" evidence="10">
    <location>
        <position position="209"/>
    </location>
</feature>
<feature type="site" description="Interacts with H3R8" evidence="10">
    <location>
        <position position="227"/>
    </location>
</feature>
<feature type="mutagenesis site" description="Reduces enzyme activity by 97%." evidence="8">
    <original>Y</original>
    <variation>F</variation>
    <location>
        <position position="191"/>
    </location>
</feature>
<feature type="mutagenesis site" description="Reduces enzyme activity by over 99%." evidence="8">
    <original>Y</original>
    <variation>V</variation>
    <location>
        <position position="191"/>
    </location>
</feature>
<feature type="mutagenesis site" description="Reduces enzyme activity by over 99%." evidence="8">
    <original>D</original>
    <variation>E</variation>
    <location>
        <position position="222"/>
    </location>
</feature>
<feature type="mutagenesis site" description="Reduces enzyme activity by 97%." evidence="8">
    <original>D</original>
    <variation>K</variation>
    <location>
        <position position="222"/>
    </location>
</feature>
<feature type="mutagenesis site" description="Reduces enzyme activity by 97%." evidence="8">
    <original>D</original>
    <variation>Q</variation>
    <location>
        <position position="222"/>
    </location>
</feature>
<feature type="mutagenesis site" description="Reduces enzyme activity by over 99%." evidence="6">
    <original>R</original>
    <variation>H</variation>
    <location>
        <position position="251"/>
    </location>
</feature>
<feature type="mutagenesis site" description="Reduces enzyme activity by over 99%." evidence="6">
    <original>N</original>
    <variation>Q</variation>
    <location>
        <position position="254"/>
    </location>
</feature>
<feature type="mutagenesis site" description="Reduces enzyme activity by over 99%." evidence="6">
    <original>H</original>
    <variation>K</variation>
    <location>
        <position position="255"/>
    </location>
</feature>
<feature type="mutagenesis site" description="Converts the product-specificity of the HKMT from H3K9me3 to H3K9me1/2." evidence="9">
    <original>F</original>
    <variation>Y</variation>
    <location>
        <position position="281"/>
    </location>
</feature>
<feature type="mutagenesis site" description="Reduces enzyme activity by over 99%." evidence="8">
    <original>F</original>
    <variation>W</variation>
    <location>
        <position position="294"/>
    </location>
</feature>
<feature type="mutagenesis site" description="Reduces enzyme activity by 20%." evidence="8">
    <original>F</original>
    <variation>Y</variation>
    <location>
        <position position="294"/>
    </location>
</feature>
<feature type="mutagenesis site" description="Reduces enzyme activity by over 99%." evidence="6">
    <original>Y</original>
    <variation>F</variation>
    <location>
        <position position="296"/>
    </location>
</feature>
<feature type="mutagenesis site" description="Reduces enzyme activity by over 99%." evidence="8">
    <original>L</original>
    <variation>A</variation>
    <location>
        <position position="330"/>
    </location>
</feature>
<feature type="mutagenesis site" description="Reduces enzyme activity by 97%." evidence="8">
    <original>W</original>
    <variation>A</variation>
    <location>
        <position position="331"/>
    </location>
</feature>
<feature type="strand" evidence="14">
    <location>
        <begin position="41"/>
        <end position="44"/>
    </location>
</feature>
<feature type="strand" evidence="14">
    <location>
        <begin position="46"/>
        <end position="49"/>
    </location>
</feature>
<feature type="helix" evidence="14">
    <location>
        <begin position="73"/>
        <end position="75"/>
    </location>
</feature>
<feature type="helix" evidence="14">
    <location>
        <begin position="86"/>
        <end position="88"/>
    </location>
</feature>
<feature type="helix" evidence="14">
    <location>
        <begin position="93"/>
        <end position="95"/>
    </location>
</feature>
<feature type="strand" evidence="15">
    <location>
        <begin position="96"/>
        <end position="98"/>
    </location>
</feature>
<feature type="strand" evidence="14">
    <location>
        <begin position="115"/>
        <end position="118"/>
    </location>
</feature>
<feature type="strand" evidence="15">
    <location>
        <begin position="119"/>
        <end position="121"/>
    </location>
</feature>
<feature type="turn" evidence="15">
    <location>
        <begin position="122"/>
        <end position="125"/>
    </location>
</feature>
<feature type="helix" evidence="14">
    <location>
        <begin position="129"/>
        <end position="134"/>
    </location>
</feature>
<feature type="helix" evidence="14">
    <location>
        <begin position="155"/>
        <end position="158"/>
    </location>
</feature>
<feature type="strand" evidence="14">
    <location>
        <begin position="164"/>
        <end position="168"/>
    </location>
</feature>
<feature type="strand" evidence="14">
    <location>
        <begin position="170"/>
        <end position="172"/>
    </location>
</feature>
<feature type="strand" evidence="14">
    <location>
        <begin position="174"/>
        <end position="177"/>
    </location>
</feature>
<feature type="strand" evidence="14">
    <location>
        <begin position="187"/>
        <end position="190"/>
    </location>
</feature>
<feature type="strand" evidence="14">
    <location>
        <begin position="194"/>
        <end position="196"/>
    </location>
</feature>
<feature type="helix" evidence="14">
    <location>
        <begin position="198"/>
        <end position="207"/>
    </location>
</feature>
<feature type="helix" evidence="14">
    <location>
        <begin position="210"/>
        <end position="212"/>
    </location>
</feature>
<feature type="helix" evidence="14">
    <location>
        <begin position="214"/>
        <end position="217"/>
    </location>
</feature>
<feature type="strand" evidence="14">
    <location>
        <begin position="218"/>
        <end position="220"/>
    </location>
</feature>
<feature type="strand" evidence="14">
    <location>
        <begin position="227"/>
        <end position="230"/>
    </location>
</feature>
<feature type="helix" evidence="14">
    <location>
        <begin position="232"/>
        <end position="235"/>
    </location>
</feature>
<feature type="strand" evidence="14">
    <location>
        <begin position="240"/>
        <end position="242"/>
    </location>
</feature>
<feature type="strand" evidence="14">
    <location>
        <begin position="244"/>
        <end position="247"/>
    </location>
</feature>
<feature type="helix" evidence="14">
    <location>
        <begin position="249"/>
        <end position="252"/>
    </location>
</feature>
<feature type="strand" evidence="14">
    <location>
        <begin position="260"/>
        <end position="269"/>
    </location>
</feature>
<feature type="helix" evidence="14">
    <location>
        <begin position="270"/>
        <end position="275"/>
    </location>
</feature>
<feature type="strand" evidence="14">
    <location>
        <begin position="277"/>
        <end position="284"/>
    </location>
</feature>
<feature type="strand" evidence="14">
    <location>
        <begin position="291"/>
        <end position="294"/>
    </location>
</feature>
<gene>
    <name type="primary">dim-5</name>
    <name type="ORF">29E8.110</name>
    <name type="ORF">NCU04402</name>
</gene>
<reference key="1">
    <citation type="journal article" date="2001" name="Nature">
        <title>A histone H3 methyltransferase controls DNA methylation in Neurospora crassa.</title>
        <authorList>
            <person name="Tamaru H."/>
            <person name="Selker E.U."/>
        </authorList>
    </citation>
    <scope>NUCLEOTIDE SEQUENCE [GENOMIC DNA]</scope>
    <scope>FUNCTION</scope>
    <source>
        <strain>ATCC 18889 / 74-OR8-1a / 40-21 / DSM 1258 / FGSC 988</strain>
    </source>
</reference>
<reference key="2">
    <citation type="journal article" date="2003" name="Nucleic Acids Res.">
        <title>What's in the genome of a filamentous fungus? Analysis of the Neurospora genome sequence.</title>
        <authorList>
            <person name="Mannhaupt G."/>
            <person name="Montrone C."/>
            <person name="Haase D."/>
            <person name="Mewes H.-W."/>
            <person name="Aign V."/>
            <person name="Hoheisel J.D."/>
            <person name="Fartmann B."/>
            <person name="Nyakatura G."/>
            <person name="Kempken F."/>
            <person name="Maier J."/>
            <person name="Schulte U."/>
        </authorList>
    </citation>
    <scope>NUCLEOTIDE SEQUENCE [LARGE SCALE GENOMIC DNA]</scope>
    <source>
        <strain>ATCC 24698 / 74-OR23-1A / CBS 708.71 / DSM 1257 / FGSC 987</strain>
    </source>
</reference>
<reference key="3">
    <citation type="journal article" date="2003" name="Nature">
        <title>The genome sequence of the filamentous fungus Neurospora crassa.</title>
        <authorList>
            <person name="Galagan J.E."/>
            <person name="Calvo S.E."/>
            <person name="Borkovich K.A."/>
            <person name="Selker E.U."/>
            <person name="Read N.D."/>
            <person name="Jaffe D.B."/>
            <person name="FitzHugh W."/>
            <person name="Ma L.-J."/>
            <person name="Smirnov S."/>
            <person name="Purcell S."/>
            <person name="Rehman B."/>
            <person name="Elkins T."/>
            <person name="Engels R."/>
            <person name="Wang S."/>
            <person name="Nielsen C.B."/>
            <person name="Butler J."/>
            <person name="Endrizzi M."/>
            <person name="Qui D."/>
            <person name="Ianakiev P."/>
            <person name="Bell-Pedersen D."/>
            <person name="Nelson M.A."/>
            <person name="Werner-Washburne M."/>
            <person name="Selitrennikoff C.P."/>
            <person name="Kinsey J.A."/>
            <person name="Braun E.L."/>
            <person name="Zelter A."/>
            <person name="Schulte U."/>
            <person name="Kothe G.O."/>
            <person name="Jedd G."/>
            <person name="Mewes H.-W."/>
            <person name="Staben C."/>
            <person name="Marcotte E."/>
            <person name="Greenberg D."/>
            <person name="Roy A."/>
            <person name="Foley K."/>
            <person name="Naylor J."/>
            <person name="Stange-Thomann N."/>
            <person name="Barrett R."/>
            <person name="Gnerre S."/>
            <person name="Kamal M."/>
            <person name="Kamvysselis M."/>
            <person name="Mauceli E.W."/>
            <person name="Bielke C."/>
            <person name="Rudd S."/>
            <person name="Frishman D."/>
            <person name="Krystofova S."/>
            <person name="Rasmussen C."/>
            <person name="Metzenberg R.L."/>
            <person name="Perkins D.D."/>
            <person name="Kroken S."/>
            <person name="Cogoni C."/>
            <person name="Macino G."/>
            <person name="Catcheside D.E.A."/>
            <person name="Li W."/>
            <person name="Pratt R.J."/>
            <person name="Osmani S.A."/>
            <person name="DeSouza C.P.C."/>
            <person name="Glass N.L."/>
            <person name="Orbach M.J."/>
            <person name="Berglund J.A."/>
            <person name="Voelker R."/>
            <person name="Yarden O."/>
            <person name="Plamann M."/>
            <person name="Seiler S."/>
            <person name="Dunlap J.C."/>
            <person name="Radford A."/>
            <person name="Aramayo R."/>
            <person name="Natvig D.O."/>
            <person name="Alex L.A."/>
            <person name="Mannhaupt G."/>
            <person name="Ebbole D.J."/>
            <person name="Freitag M."/>
            <person name="Paulsen I."/>
            <person name="Sachs M.S."/>
            <person name="Lander E.S."/>
            <person name="Nusbaum C."/>
            <person name="Birren B.W."/>
        </authorList>
    </citation>
    <scope>NUCLEOTIDE SEQUENCE [LARGE SCALE GENOMIC DNA]</scope>
    <source>
        <strain>ATCC 24698 / 74-OR23-1A / CBS 708.71 / DSM 1257 / FGSC 987</strain>
    </source>
</reference>
<reference key="4">
    <citation type="journal article" date="2003" name="Nat. Genet.">
        <title>Trimethylated lysine 9 of histone H3 is a mark for DNA methylation in Neurospora crassa.</title>
        <authorList>
            <person name="Tamaru H."/>
            <person name="Zhang X."/>
            <person name="McMillen D."/>
            <person name="Singh P.B."/>
            <person name="Nakayama J."/>
            <person name="Grewal S.I."/>
            <person name="Allis C.D."/>
            <person name="Cheng X."/>
            <person name="Selker E.U."/>
        </authorList>
    </citation>
    <scope>FUNCTION</scope>
    <scope>CATALYTIC ACTIVITY</scope>
    <scope>METHYLATION OF HISTONE H3</scope>
</reference>
<reference key="5">
    <citation type="journal article" date="2005" name="J. Biol. Chem.">
        <title>In vitro and in vivo analyses of a Phe/Tyr switch controlling product specificity of histone lysine methyltransferases.</title>
        <authorList>
            <person name="Collins R.E."/>
            <person name="Tachibana M."/>
            <person name="Tamaru H."/>
            <person name="Smith K.M."/>
            <person name="Jia D."/>
            <person name="Zhang X."/>
            <person name="Selker E.U."/>
            <person name="Shinkai Y."/>
            <person name="Cheng X."/>
        </authorList>
    </citation>
    <scope>SUBSTRATE SPECIFICITY</scope>
    <scope>MUTAGENESIS OF PHE-281</scope>
</reference>
<reference key="6">
    <citation type="journal article" date="2008" name="Chem. Biol.">
        <title>Analysis of the substrate specificity of the Dim-5 histone lysine methyltransferase using peptide arrays.</title>
        <authorList>
            <person name="Rathert P."/>
            <person name="Zhang X."/>
            <person name="Freund C."/>
            <person name="Cheng X."/>
            <person name="Jeltsch A."/>
        </authorList>
    </citation>
    <scope>SUBSTRATE SPECIFICITY</scope>
</reference>
<reference key="7">
    <citation type="journal article" date="2002" name="Cell">
        <title>Structure of the Neurospora SET domain protein DIM-5, a histone H3 lysine methyltransferase.</title>
        <authorList>
            <person name="Zhang X."/>
            <person name="Tamaru H."/>
            <person name="Khan S.I."/>
            <person name="Horton J.R."/>
            <person name="Keefe L.J."/>
            <person name="Selker E.U."/>
            <person name="Cheng X."/>
        </authorList>
    </citation>
    <scope>X-RAY CRYSTALLOGRAPHY (1.98 ANGSTROMS) OF 30-331 IN COMPLEX WITH ZINC IONS</scope>
    <scope>FUNCTION</scope>
    <scope>CATALYTIC ACTIVITY</scope>
    <scope>MUTAGENESIS OF ARG-251; ASN-254; HIS-255 AND TYR-296</scope>
</reference>
<reference key="8">
    <citation type="journal article" date="2003" name="Mol. Cell">
        <title>Structural basis for the product specificity of histone lysine methyltransferases.</title>
        <authorList>
            <person name="Zhang X."/>
            <person name="Yang Z."/>
            <person name="Khan S.I."/>
            <person name="Horton J.R."/>
            <person name="Tamaru H."/>
            <person name="Selker E.U."/>
            <person name="Cheng X."/>
        </authorList>
    </citation>
    <scope>X-RAY CRYSTALLOGRAPHY (2.59 ANGSTROMS) OF 30-331 IN COMPLEX WITH HISTONE H3; S-ADENOSYL-L-HOMOCYSTEINE AND ZINC IONS</scope>
    <scope>FUNCTION</scope>
    <scope>CATALYTIC ACTIVITY</scope>
    <scope>MUTAGENESIS OF TYR-191; ASP-222; PHE-294; LEU-330 AND TRP-331</scope>
</reference>
<accession>Q8X225</accession>
<accession>Q1K5Y7</accession>
<protein>
    <recommendedName>
        <fullName>Histone-lysine N-methyltransferase, H3 lysine-9 specific dim-5</fullName>
        <ecNumber evidence="6 7 8">2.1.1.355</ecNumber>
    </recommendedName>
    <alternativeName>
        <fullName>Histone H3-K9 methyltransferase dim-5</fullName>
        <shortName>H3-K9-HMTase dim-5</shortName>
        <shortName>HKMT</shortName>
    </alternativeName>
</protein>